<accession>A9MFG1</accession>
<organism>
    <name type="scientific">Salmonella arizonae (strain ATCC BAA-731 / CDC346-86 / RSK2980)</name>
    <dbReference type="NCBI Taxonomy" id="41514"/>
    <lineage>
        <taxon>Bacteria</taxon>
        <taxon>Pseudomonadati</taxon>
        <taxon>Pseudomonadota</taxon>
        <taxon>Gammaproteobacteria</taxon>
        <taxon>Enterobacterales</taxon>
        <taxon>Enterobacteriaceae</taxon>
        <taxon>Salmonella</taxon>
    </lineage>
</organism>
<dbReference type="EC" id="2.3.1.109" evidence="1"/>
<dbReference type="EMBL" id="CP000880">
    <property type="protein sequence ID" value="ABX21566.1"/>
    <property type="molecule type" value="Genomic_DNA"/>
</dbReference>
<dbReference type="SMR" id="A9MFG1"/>
<dbReference type="STRING" id="41514.SARI_01675"/>
<dbReference type="KEGG" id="ses:SARI_01675"/>
<dbReference type="HOGENOM" id="CLU_057655_0_0_6"/>
<dbReference type="UniPathway" id="UPA00185">
    <property type="reaction ID" value="UER00279"/>
</dbReference>
<dbReference type="Proteomes" id="UP000002084">
    <property type="component" value="Chromosome"/>
</dbReference>
<dbReference type="GO" id="GO:0008791">
    <property type="term" value="F:arginine N-succinyltransferase activity"/>
    <property type="evidence" value="ECO:0007669"/>
    <property type="project" value="UniProtKB-UniRule"/>
</dbReference>
<dbReference type="GO" id="GO:0019544">
    <property type="term" value="P:arginine catabolic process to glutamate"/>
    <property type="evidence" value="ECO:0007669"/>
    <property type="project" value="UniProtKB-UniRule"/>
</dbReference>
<dbReference type="GO" id="GO:0019545">
    <property type="term" value="P:arginine catabolic process to succinate"/>
    <property type="evidence" value="ECO:0007669"/>
    <property type="project" value="UniProtKB-UniRule"/>
</dbReference>
<dbReference type="Gene3D" id="2.40.40.20">
    <property type="match status" value="1"/>
</dbReference>
<dbReference type="Gene3D" id="3.40.630.30">
    <property type="match status" value="1"/>
</dbReference>
<dbReference type="HAMAP" id="MF_01171">
    <property type="entry name" value="AstA"/>
    <property type="match status" value="1"/>
</dbReference>
<dbReference type="InterPro" id="IPR016181">
    <property type="entry name" value="Acyl_CoA_acyltransferase"/>
</dbReference>
<dbReference type="InterPro" id="IPR007041">
    <property type="entry name" value="Arg_succinylTrfase_AstA/AruG"/>
</dbReference>
<dbReference type="InterPro" id="IPR017650">
    <property type="entry name" value="Arginine_N-succinylTrfase"/>
</dbReference>
<dbReference type="NCBIfam" id="TIGR03243">
    <property type="entry name" value="arg_catab_AOST"/>
    <property type="match status" value="1"/>
</dbReference>
<dbReference type="NCBIfam" id="TIGR03244">
    <property type="entry name" value="arg_catab_AstA"/>
    <property type="match status" value="1"/>
</dbReference>
<dbReference type="NCBIfam" id="NF007770">
    <property type="entry name" value="PRK10456.1"/>
    <property type="match status" value="1"/>
</dbReference>
<dbReference type="PANTHER" id="PTHR30420:SF1">
    <property type="entry name" value="ARGININE N-SUCCINYLTRANSFERASE"/>
    <property type="match status" value="1"/>
</dbReference>
<dbReference type="PANTHER" id="PTHR30420">
    <property type="entry name" value="N-SUCCINYLARGININE DIHYDROLASE"/>
    <property type="match status" value="1"/>
</dbReference>
<dbReference type="Pfam" id="PF04958">
    <property type="entry name" value="AstA"/>
    <property type="match status" value="1"/>
</dbReference>
<dbReference type="SUPFAM" id="SSF55729">
    <property type="entry name" value="Acyl-CoA N-acyltransferases (Nat)"/>
    <property type="match status" value="1"/>
</dbReference>
<keyword id="KW-0012">Acyltransferase</keyword>
<keyword id="KW-0056">Arginine metabolism</keyword>
<keyword id="KW-1185">Reference proteome</keyword>
<keyword id="KW-0808">Transferase</keyword>
<name>ASTA_SALAR</name>
<comment type="function">
    <text evidence="1">Catalyzes the transfer of succinyl-CoA to arginine to produce N(2)-succinylarginine.</text>
</comment>
<comment type="catalytic activity">
    <reaction evidence="1">
        <text>succinyl-CoA + L-arginine = N(2)-succinyl-L-arginine + CoA + H(+)</text>
        <dbReference type="Rhea" id="RHEA:15185"/>
        <dbReference type="ChEBI" id="CHEBI:15378"/>
        <dbReference type="ChEBI" id="CHEBI:32682"/>
        <dbReference type="ChEBI" id="CHEBI:57287"/>
        <dbReference type="ChEBI" id="CHEBI:57292"/>
        <dbReference type="ChEBI" id="CHEBI:58241"/>
        <dbReference type="EC" id="2.3.1.109"/>
    </reaction>
</comment>
<comment type="pathway">
    <text evidence="1">Amino-acid degradation; L-arginine degradation via AST pathway; L-glutamate and succinate from L-arginine: step 1/5.</text>
</comment>
<comment type="similarity">
    <text evidence="1">Belongs to the arginine N-succinyltransferase family.</text>
</comment>
<proteinExistence type="inferred from homology"/>
<evidence type="ECO:0000255" key="1">
    <source>
        <dbReference type="HAMAP-Rule" id="MF_01171"/>
    </source>
</evidence>
<feature type="chain" id="PRO_1000085391" description="Arginine N-succinyltransferase">
    <location>
        <begin position="1"/>
        <end position="344"/>
    </location>
</feature>
<feature type="active site" description="Proton donor" evidence="1">
    <location>
        <position position="229"/>
    </location>
</feature>
<feature type="binding site" evidence="1">
    <location>
        <position position="125"/>
    </location>
    <ligand>
        <name>succinyl-CoA</name>
        <dbReference type="ChEBI" id="CHEBI:57292"/>
    </ligand>
</feature>
<protein>
    <recommendedName>
        <fullName evidence="1">Arginine N-succinyltransferase</fullName>
        <shortName evidence="1">AST</shortName>
        <ecNumber evidence="1">2.3.1.109</ecNumber>
    </recommendedName>
    <alternativeName>
        <fullName evidence="1">AOST</fullName>
    </alternativeName>
</protein>
<sequence length="344" mass="38457">MRVIRPVEHADIAALMRLAGKTGGGLTSLPANEATLAARIERARKTWSDDLPKSEQGYVFVLEDSETGEVGGICAIEVAVGLNDPWYNYRVGTLVHASKELNVYNALPTLFLSNDHTGSSELCTLFLDPEWRKEGNGYVLSKSRFMFMAAFRDKFNEKVVAEMRGVIDEHGYSPFWQSLGKRFFSMDFSRADFLCGTGQKAFIAELMPKHPIYTHFLSEEAQAVIGEVHPQTAPARAVLEKEGFRYRHYIDIFDGGPTLECDIDRVRAIRKSRLVEIAEGQPAPGDYPACLVANENYHHFRAALVRADPQTSRLVFTAAQLDALKCRAGDHVRLVRLCAEEKTV</sequence>
<gene>
    <name evidence="1" type="primary">astA</name>
    <name type="ordered locus">SARI_01675</name>
</gene>
<reference key="1">
    <citation type="submission" date="2007-11" db="EMBL/GenBank/DDBJ databases">
        <authorList>
            <consortium name="The Salmonella enterica serovar Arizonae Genome Sequencing Project"/>
            <person name="McClelland M."/>
            <person name="Sanderson E.K."/>
            <person name="Porwollik S."/>
            <person name="Spieth J."/>
            <person name="Clifton W.S."/>
            <person name="Fulton R."/>
            <person name="Chunyan W."/>
            <person name="Wollam A."/>
            <person name="Shah N."/>
            <person name="Pepin K."/>
            <person name="Bhonagiri V."/>
            <person name="Nash W."/>
            <person name="Johnson M."/>
            <person name="Thiruvilangam P."/>
            <person name="Wilson R."/>
        </authorList>
    </citation>
    <scope>NUCLEOTIDE SEQUENCE [LARGE SCALE GENOMIC DNA]</scope>
    <source>
        <strain>ATCC BAA-731 / CDC346-86 / RSK2980</strain>
    </source>
</reference>